<comment type="function">
    <text evidence="1">ATP-dependent RNA helicase which is a subunit of the eIF4F complex involved in cap recognition and is required for mRNA binding to ribosome. In the current model of translation initiation, eIF4A unwinds RNA secondary structures in the 5'-UTR of mRNAs which is necessary to allow efficient binding of the small ribosomal subunit, and subsequent scanning for the initiator codon (By similarity).</text>
</comment>
<comment type="catalytic activity">
    <reaction>
        <text>ATP + H2O = ADP + phosphate + H(+)</text>
        <dbReference type="Rhea" id="RHEA:13065"/>
        <dbReference type="ChEBI" id="CHEBI:15377"/>
        <dbReference type="ChEBI" id="CHEBI:15378"/>
        <dbReference type="ChEBI" id="CHEBI:30616"/>
        <dbReference type="ChEBI" id="CHEBI:43474"/>
        <dbReference type="ChEBI" id="CHEBI:456216"/>
        <dbReference type="EC" id="3.6.4.13"/>
    </reaction>
</comment>
<comment type="subunit">
    <text evidence="1">Component of the eIF4F complex, which composition varies with external and internal environmental conditions. It is composed of at least eIF4A, eIF4E and eIF4G (By similarity).</text>
</comment>
<comment type="subcellular location">
    <subcellularLocation>
        <location evidence="1">Cytoplasm</location>
    </subcellularLocation>
</comment>
<comment type="domain">
    <text>The Q motif is unique to and characteristic of the DEAD box family of RNA helicases and controls ATP binding and hydrolysis.</text>
</comment>
<comment type="similarity">
    <text evidence="5">Belongs to the DEAD box helicase family. eIF4A subfamily.</text>
</comment>
<comment type="sequence caution" evidence="5">
    <conflict type="erroneous gene model prediction">
        <sequence resource="EMBL-CDS" id="EAA63503"/>
    </conflict>
</comment>
<name>IF4A_EMENI</name>
<organism>
    <name type="scientific">Emericella nidulans (strain FGSC A4 / ATCC 38163 / CBS 112.46 / NRRL 194 / M139)</name>
    <name type="common">Aspergillus nidulans</name>
    <dbReference type="NCBI Taxonomy" id="227321"/>
    <lineage>
        <taxon>Eukaryota</taxon>
        <taxon>Fungi</taxon>
        <taxon>Dikarya</taxon>
        <taxon>Ascomycota</taxon>
        <taxon>Pezizomycotina</taxon>
        <taxon>Eurotiomycetes</taxon>
        <taxon>Eurotiomycetidae</taxon>
        <taxon>Eurotiales</taxon>
        <taxon>Aspergillaceae</taxon>
        <taxon>Aspergillus</taxon>
        <taxon>Aspergillus subgen. Nidulantes</taxon>
    </lineage>
</organism>
<sequence>MASNDKGLEEIPDSQIESNYDEITDSFDSMELKPELLRGVYAYGFERPSAIQQRAILPIVKGNDVIAQAQSGTGKTATFSISALQKLDPNVKACQALIVAPTRELAQQIQKVVIAIGDFMNIQCHACIGGTAVRDDMNALREGPQIVVGTPGRIHDMIQRRVLKTDQMKMFILDEADEMLSRGFTEQIYDIFQLLPQSTQVVLLSATMPQDVLEVTTKFMRDPVRILVKKQELTLEGIKQFYIAVEKEEWKLDTLSDLYETVTITQAVIFCNTRRKVDWLTDKLTARDFTVSAMHGDMEQAQRDVIMKEFRSGSSRVLIATDLLARGIDVQQVSLVINYDLPANRENYIHRIGRGGRFGRKGVAINFVTADDVRMMREIEQFYSTQIEEMPMNVADLI</sequence>
<gene>
    <name type="primary">tif1</name>
    <name type="synonym">tif41</name>
    <name type="ORF">AN2932</name>
</gene>
<accession>Q5B948</accession>
<accession>C8VJ49</accession>
<reference key="1">
    <citation type="journal article" date="2005" name="Nature">
        <title>Sequencing of Aspergillus nidulans and comparative analysis with A. fumigatus and A. oryzae.</title>
        <authorList>
            <person name="Galagan J.E."/>
            <person name="Calvo S.E."/>
            <person name="Cuomo C."/>
            <person name="Ma L.-J."/>
            <person name="Wortman J.R."/>
            <person name="Batzoglou S."/>
            <person name="Lee S.-I."/>
            <person name="Bastuerkmen M."/>
            <person name="Spevak C.C."/>
            <person name="Clutterbuck J."/>
            <person name="Kapitonov V."/>
            <person name="Jurka J."/>
            <person name="Scazzocchio C."/>
            <person name="Farman M.L."/>
            <person name="Butler J."/>
            <person name="Purcell S."/>
            <person name="Harris S."/>
            <person name="Braus G.H."/>
            <person name="Draht O."/>
            <person name="Busch S."/>
            <person name="D'Enfert C."/>
            <person name="Bouchier C."/>
            <person name="Goldman G.H."/>
            <person name="Bell-Pedersen D."/>
            <person name="Griffiths-Jones S."/>
            <person name="Doonan J.H."/>
            <person name="Yu J."/>
            <person name="Vienken K."/>
            <person name="Pain A."/>
            <person name="Freitag M."/>
            <person name="Selker E.U."/>
            <person name="Archer D.B."/>
            <person name="Penalva M.A."/>
            <person name="Oakley B.R."/>
            <person name="Momany M."/>
            <person name="Tanaka T."/>
            <person name="Kumagai T."/>
            <person name="Asai K."/>
            <person name="Machida M."/>
            <person name="Nierman W.C."/>
            <person name="Denning D.W."/>
            <person name="Caddick M.X."/>
            <person name="Hynes M."/>
            <person name="Paoletti M."/>
            <person name="Fischer R."/>
            <person name="Miller B.L."/>
            <person name="Dyer P.S."/>
            <person name="Sachs M.S."/>
            <person name="Osmani S.A."/>
            <person name="Birren B.W."/>
        </authorList>
    </citation>
    <scope>NUCLEOTIDE SEQUENCE [LARGE SCALE GENOMIC DNA]</scope>
    <source>
        <strain>FGSC A4 / ATCC 38163 / CBS 112.46 / NRRL 194 / M139</strain>
    </source>
</reference>
<reference key="2">
    <citation type="journal article" date="2009" name="Fungal Genet. Biol.">
        <title>The 2008 update of the Aspergillus nidulans genome annotation: a community effort.</title>
        <authorList>
            <person name="Wortman J.R."/>
            <person name="Gilsenan J.M."/>
            <person name="Joardar V."/>
            <person name="Deegan J."/>
            <person name="Clutterbuck J."/>
            <person name="Andersen M.R."/>
            <person name="Archer D."/>
            <person name="Bencina M."/>
            <person name="Braus G."/>
            <person name="Coutinho P."/>
            <person name="von Dohren H."/>
            <person name="Doonan J."/>
            <person name="Driessen A.J."/>
            <person name="Durek P."/>
            <person name="Espeso E."/>
            <person name="Fekete E."/>
            <person name="Flipphi M."/>
            <person name="Estrada C.G."/>
            <person name="Geysens S."/>
            <person name="Goldman G."/>
            <person name="de Groot P.W."/>
            <person name="Hansen K."/>
            <person name="Harris S.D."/>
            <person name="Heinekamp T."/>
            <person name="Helmstaedt K."/>
            <person name="Henrissat B."/>
            <person name="Hofmann G."/>
            <person name="Homan T."/>
            <person name="Horio T."/>
            <person name="Horiuchi H."/>
            <person name="James S."/>
            <person name="Jones M."/>
            <person name="Karaffa L."/>
            <person name="Karanyi Z."/>
            <person name="Kato M."/>
            <person name="Keller N."/>
            <person name="Kelly D.E."/>
            <person name="Kiel J.A."/>
            <person name="Kim J.M."/>
            <person name="van der Klei I.J."/>
            <person name="Klis F.M."/>
            <person name="Kovalchuk A."/>
            <person name="Krasevec N."/>
            <person name="Kubicek C.P."/>
            <person name="Liu B."/>
            <person name="Maccabe A."/>
            <person name="Meyer V."/>
            <person name="Mirabito P."/>
            <person name="Miskei M."/>
            <person name="Mos M."/>
            <person name="Mullins J."/>
            <person name="Nelson D.R."/>
            <person name="Nielsen J."/>
            <person name="Oakley B.R."/>
            <person name="Osmani S.A."/>
            <person name="Pakula T."/>
            <person name="Paszewski A."/>
            <person name="Paulsen I."/>
            <person name="Pilsyk S."/>
            <person name="Pocsi I."/>
            <person name="Punt P.J."/>
            <person name="Ram A.F."/>
            <person name="Ren Q."/>
            <person name="Robellet X."/>
            <person name="Robson G."/>
            <person name="Seiboth B."/>
            <person name="van Solingen P."/>
            <person name="Specht T."/>
            <person name="Sun J."/>
            <person name="Taheri-Talesh N."/>
            <person name="Takeshita N."/>
            <person name="Ussery D."/>
            <person name="vanKuyk P.A."/>
            <person name="Visser H."/>
            <person name="van de Vondervoort P.J."/>
            <person name="de Vries R.P."/>
            <person name="Walton J."/>
            <person name="Xiang X."/>
            <person name="Xiong Y."/>
            <person name="Zeng A.P."/>
            <person name="Brandt B.W."/>
            <person name="Cornell M.J."/>
            <person name="van den Hondel C.A."/>
            <person name="Visser J."/>
            <person name="Oliver S.G."/>
            <person name="Turner G."/>
        </authorList>
    </citation>
    <scope>GENOME REANNOTATION</scope>
    <source>
        <strain>FGSC A4 / ATCC 38163 / CBS 112.46 / NRRL 194 / M139</strain>
    </source>
</reference>
<keyword id="KW-0067">ATP-binding</keyword>
<keyword id="KW-0963">Cytoplasm</keyword>
<keyword id="KW-0347">Helicase</keyword>
<keyword id="KW-0378">Hydrolase</keyword>
<keyword id="KW-0396">Initiation factor</keyword>
<keyword id="KW-0547">Nucleotide-binding</keyword>
<keyword id="KW-0648">Protein biosynthesis</keyword>
<keyword id="KW-1185">Reference proteome</keyword>
<keyword id="KW-0694">RNA-binding</keyword>
<feature type="chain" id="PRO_0000232136" description="ATP-dependent RNA helicase eIF4A">
    <location>
        <begin position="1"/>
        <end position="398"/>
    </location>
</feature>
<feature type="domain" description="Helicase ATP-binding" evidence="2">
    <location>
        <begin position="56"/>
        <end position="226"/>
    </location>
</feature>
<feature type="domain" description="Helicase C-terminal" evidence="3">
    <location>
        <begin position="237"/>
        <end position="398"/>
    </location>
</feature>
<feature type="short sequence motif" description="Q motif" evidence="4">
    <location>
        <begin position="25"/>
        <end position="53"/>
    </location>
</feature>
<feature type="short sequence motif" description="DEAD box" evidence="2">
    <location>
        <begin position="174"/>
        <end position="177"/>
    </location>
</feature>
<feature type="binding site" evidence="2">
    <location>
        <begin position="69"/>
        <end position="76"/>
    </location>
    <ligand>
        <name>ATP</name>
        <dbReference type="ChEBI" id="CHEBI:30616"/>
    </ligand>
</feature>
<evidence type="ECO:0000250" key="1"/>
<evidence type="ECO:0000255" key="2">
    <source>
        <dbReference type="PROSITE-ProRule" id="PRU00541"/>
    </source>
</evidence>
<evidence type="ECO:0000255" key="3">
    <source>
        <dbReference type="PROSITE-ProRule" id="PRU00542"/>
    </source>
</evidence>
<evidence type="ECO:0000255" key="4">
    <source>
        <dbReference type="PROSITE-ProRule" id="PRU00552"/>
    </source>
</evidence>
<evidence type="ECO:0000305" key="5"/>
<dbReference type="EC" id="3.6.4.13"/>
<dbReference type="EMBL" id="AACD01000051">
    <property type="protein sequence ID" value="EAA63503.1"/>
    <property type="status" value="ALT_SEQ"/>
    <property type="molecule type" value="Genomic_DNA"/>
</dbReference>
<dbReference type="EMBL" id="BN001306">
    <property type="protein sequence ID" value="CBF83723.1"/>
    <property type="molecule type" value="Genomic_DNA"/>
</dbReference>
<dbReference type="RefSeq" id="XP_660536.1">
    <property type="nucleotide sequence ID" value="XM_655444.1"/>
</dbReference>
<dbReference type="SMR" id="Q5B948"/>
<dbReference type="FunCoup" id="Q5B948">
    <property type="interactions" value="1221"/>
</dbReference>
<dbReference type="STRING" id="227321.Q5B948"/>
<dbReference type="EnsemblFungi" id="CBF83723">
    <property type="protein sequence ID" value="CBF83723"/>
    <property type="gene ID" value="ANIA_02932"/>
</dbReference>
<dbReference type="VEuPathDB" id="FungiDB:AN2932"/>
<dbReference type="eggNOG" id="KOG0327">
    <property type="taxonomic scope" value="Eukaryota"/>
</dbReference>
<dbReference type="HOGENOM" id="CLU_003041_1_0_1"/>
<dbReference type="InParanoid" id="Q5B948"/>
<dbReference type="OMA" id="FGCQALV"/>
<dbReference type="OrthoDB" id="10265785at2759"/>
<dbReference type="Proteomes" id="UP000000560">
    <property type="component" value="Chromosome VI"/>
</dbReference>
<dbReference type="GO" id="GO:0010494">
    <property type="term" value="C:cytoplasmic stress granule"/>
    <property type="evidence" value="ECO:0000318"/>
    <property type="project" value="GO_Central"/>
</dbReference>
<dbReference type="GO" id="GO:0005524">
    <property type="term" value="F:ATP binding"/>
    <property type="evidence" value="ECO:0007669"/>
    <property type="project" value="UniProtKB-KW"/>
</dbReference>
<dbReference type="GO" id="GO:0016887">
    <property type="term" value="F:ATP hydrolysis activity"/>
    <property type="evidence" value="ECO:0007669"/>
    <property type="project" value="RHEA"/>
</dbReference>
<dbReference type="GO" id="GO:0003723">
    <property type="term" value="F:RNA binding"/>
    <property type="evidence" value="ECO:0007669"/>
    <property type="project" value="UniProtKB-KW"/>
</dbReference>
<dbReference type="GO" id="GO:0003724">
    <property type="term" value="F:RNA helicase activity"/>
    <property type="evidence" value="ECO:0007669"/>
    <property type="project" value="UniProtKB-EC"/>
</dbReference>
<dbReference type="GO" id="GO:0003743">
    <property type="term" value="F:translation initiation factor activity"/>
    <property type="evidence" value="ECO:0000318"/>
    <property type="project" value="GO_Central"/>
</dbReference>
<dbReference type="GO" id="GO:0002183">
    <property type="term" value="P:cytoplasmic translational initiation"/>
    <property type="evidence" value="ECO:0000318"/>
    <property type="project" value="GO_Central"/>
</dbReference>
<dbReference type="CDD" id="cd18046">
    <property type="entry name" value="DEADc_EIF4AII_EIF4AI_DDX2"/>
    <property type="match status" value="1"/>
</dbReference>
<dbReference type="CDD" id="cd18787">
    <property type="entry name" value="SF2_C_DEAD"/>
    <property type="match status" value="1"/>
</dbReference>
<dbReference type="FunFam" id="3.40.50.300:FF:000089">
    <property type="entry name" value="Eukaryotic initiation factor 4A-II"/>
    <property type="match status" value="1"/>
</dbReference>
<dbReference type="FunFam" id="3.40.50.300:FF:000031">
    <property type="entry name" value="Eukaryotic initiation factor 4A-III"/>
    <property type="match status" value="1"/>
</dbReference>
<dbReference type="Gene3D" id="3.40.50.300">
    <property type="entry name" value="P-loop containing nucleotide triphosphate hydrolases"/>
    <property type="match status" value="2"/>
</dbReference>
<dbReference type="InterPro" id="IPR011545">
    <property type="entry name" value="DEAD/DEAH_box_helicase_dom"/>
</dbReference>
<dbReference type="InterPro" id="IPR044728">
    <property type="entry name" value="EIF4A_DEADc"/>
</dbReference>
<dbReference type="InterPro" id="IPR014001">
    <property type="entry name" value="Helicase_ATP-bd"/>
</dbReference>
<dbReference type="InterPro" id="IPR001650">
    <property type="entry name" value="Helicase_C-like"/>
</dbReference>
<dbReference type="InterPro" id="IPR027417">
    <property type="entry name" value="P-loop_NTPase"/>
</dbReference>
<dbReference type="InterPro" id="IPR000629">
    <property type="entry name" value="RNA-helicase_DEAD-box_CS"/>
</dbReference>
<dbReference type="InterPro" id="IPR014014">
    <property type="entry name" value="RNA_helicase_DEAD_Q_motif"/>
</dbReference>
<dbReference type="PANTHER" id="PTHR47958">
    <property type="entry name" value="ATP-DEPENDENT RNA HELICASE DBP3"/>
    <property type="match status" value="1"/>
</dbReference>
<dbReference type="Pfam" id="PF00270">
    <property type="entry name" value="DEAD"/>
    <property type="match status" value="1"/>
</dbReference>
<dbReference type="Pfam" id="PF00271">
    <property type="entry name" value="Helicase_C"/>
    <property type="match status" value="1"/>
</dbReference>
<dbReference type="SMART" id="SM00487">
    <property type="entry name" value="DEXDc"/>
    <property type="match status" value="1"/>
</dbReference>
<dbReference type="SMART" id="SM00490">
    <property type="entry name" value="HELICc"/>
    <property type="match status" value="1"/>
</dbReference>
<dbReference type="SUPFAM" id="SSF52540">
    <property type="entry name" value="P-loop containing nucleoside triphosphate hydrolases"/>
    <property type="match status" value="1"/>
</dbReference>
<dbReference type="PROSITE" id="PS00039">
    <property type="entry name" value="DEAD_ATP_HELICASE"/>
    <property type="match status" value="1"/>
</dbReference>
<dbReference type="PROSITE" id="PS51192">
    <property type="entry name" value="HELICASE_ATP_BIND_1"/>
    <property type="match status" value="1"/>
</dbReference>
<dbReference type="PROSITE" id="PS51194">
    <property type="entry name" value="HELICASE_CTER"/>
    <property type="match status" value="1"/>
</dbReference>
<dbReference type="PROSITE" id="PS51195">
    <property type="entry name" value="Q_MOTIF"/>
    <property type="match status" value="1"/>
</dbReference>
<protein>
    <recommendedName>
        <fullName>ATP-dependent RNA helicase eIF4A</fullName>
        <ecNumber>3.6.4.13</ecNumber>
    </recommendedName>
    <alternativeName>
        <fullName>Eukaryotic initiation factor 4A</fullName>
        <shortName>eIF-4A</shortName>
    </alternativeName>
    <alternativeName>
        <fullName>Translation initiation factor 1</fullName>
    </alternativeName>
</protein>
<proteinExistence type="inferred from homology"/>